<name>WECG_ECODH</name>
<accession>B1XAG6</accession>
<dbReference type="EC" id="2.4.1.180" evidence="1"/>
<dbReference type="EMBL" id="CP000948">
    <property type="protein sequence ID" value="ACB04824.1"/>
    <property type="molecule type" value="Genomic_DNA"/>
</dbReference>
<dbReference type="RefSeq" id="WP_001064040.1">
    <property type="nucleotide sequence ID" value="NC_010473.1"/>
</dbReference>
<dbReference type="SMR" id="B1XAG6"/>
<dbReference type="CAZy" id="GT26">
    <property type="family name" value="Glycosyltransferase Family 26"/>
</dbReference>
<dbReference type="KEGG" id="ecd:ECDH10B_3984"/>
<dbReference type="HOGENOM" id="CLU_063203_3_2_6"/>
<dbReference type="UniPathway" id="UPA00566"/>
<dbReference type="GO" id="GO:0047241">
    <property type="term" value="F:lipopolysaccharide N-acetylmannosaminouronosyltransferase activity"/>
    <property type="evidence" value="ECO:0007669"/>
    <property type="project" value="UniProtKB-UniRule"/>
</dbReference>
<dbReference type="GO" id="GO:0009246">
    <property type="term" value="P:enterobacterial common antigen biosynthetic process"/>
    <property type="evidence" value="ECO:0007669"/>
    <property type="project" value="UniProtKB-UniRule"/>
</dbReference>
<dbReference type="CDD" id="cd06533">
    <property type="entry name" value="Glyco_transf_WecG_TagA"/>
    <property type="match status" value="1"/>
</dbReference>
<dbReference type="HAMAP" id="MF_01001">
    <property type="entry name" value="WecG_RffM"/>
    <property type="match status" value="1"/>
</dbReference>
<dbReference type="InterPro" id="IPR023085">
    <property type="entry name" value="UDP-ManNAcA_Trfase_WecG"/>
</dbReference>
<dbReference type="InterPro" id="IPR004629">
    <property type="entry name" value="WecG_TagA_CpsF"/>
</dbReference>
<dbReference type="NCBIfam" id="NF002980">
    <property type="entry name" value="PRK03692.1"/>
    <property type="match status" value="1"/>
</dbReference>
<dbReference type="NCBIfam" id="TIGR00696">
    <property type="entry name" value="wecG_tagA_cpsF"/>
    <property type="match status" value="1"/>
</dbReference>
<dbReference type="PANTHER" id="PTHR34136">
    <property type="match status" value="1"/>
</dbReference>
<dbReference type="PANTHER" id="PTHR34136:SF1">
    <property type="entry name" value="UDP-N-ACETYL-D-MANNOSAMINURONIC ACID TRANSFERASE"/>
    <property type="match status" value="1"/>
</dbReference>
<dbReference type="Pfam" id="PF03808">
    <property type="entry name" value="Glyco_tran_WecG"/>
    <property type="match status" value="1"/>
</dbReference>
<evidence type="ECO:0000255" key="1">
    <source>
        <dbReference type="HAMAP-Rule" id="MF_01001"/>
    </source>
</evidence>
<gene>
    <name evidence="1" type="primary">wecG</name>
    <name evidence="1" type="synonym">rffM</name>
    <name type="ordered locus">ECDH10B_3984</name>
</gene>
<sequence>MNNNTTAPTYTLRGLQLIGWRDMQHALDYLFADGQLKQGTLVAINAEKMLTIEDNAEVRELINAAEFKYADGISVVRSVRKKYPQAQVSRVAGADLWEELMARAGKEGTPVFLVGGKPEVLAQTEAKLRNQWNVNIVGSQDGYFKPEQRQALFERIHASGAQIVTVAMGSPKQEIIMRDCRLVHPDALYMGVGGTYDVFTGHVKRAPKIWQTLGLEWLYRLLSQPSRIKRQLRLLRYLRWHYTGNL</sequence>
<feature type="chain" id="PRO_1000134575" description="UDP-N-acetyl-D-mannosaminuronic acid transferase">
    <location>
        <begin position="1"/>
        <end position="246"/>
    </location>
</feature>
<proteinExistence type="inferred from homology"/>
<protein>
    <recommendedName>
        <fullName evidence="1">UDP-N-acetyl-D-mannosaminuronic acid transferase</fullName>
        <shortName evidence="1">UDP-ManNAcA transferase</shortName>
        <ecNumber evidence="1">2.4.1.180</ecNumber>
    </recommendedName>
</protein>
<organism>
    <name type="scientific">Escherichia coli (strain K12 / DH10B)</name>
    <dbReference type="NCBI Taxonomy" id="316385"/>
    <lineage>
        <taxon>Bacteria</taxon>
        <taxon>Pseudomonadati</taxon>
        <taxon>Pseudomonadota</taxon>
        <taxon>Gammaproteobacteria</taxon>
        <taxon>Enterobacterales</taxon>
        <taxon>Enterobacteriaceae</taxon>
        <taxon>Escherichia</taxon>
    </lineage>
</organism>
<keyword id="KW-0328">Glycosyltransferase</keyword>
<keyword id="KW-0808">Transferase</keyword>
<comment type="function">
    <text evidence="1">Catalyzes the synthesis of Und-PP-GlcNAc-ManNAcA (Lipid II), the second lipid-linked intermediate involved in enterobacterial common antigen (ECA) synthesis.</text>
</comment>
<comment type="catalytic activity">
    <reaction evidence="1">
        <text>UDP-N-acetyl-alpha-D-mannosaminouronate + N-acetyl-alpha-D-glucosaminyl-di-trans,octa-cis-undecaprenyl diphosphate = beta-D-ManNAcA-(1-&gt;4)-alpha-D-GlcNAc-di-trans,octa-cis-undecaprenyl diphosphate + UDP + H(+)</text>
        <dbReference type="Rhea" id="RHEA:28366"/>
        <dbReference type="ChEBI" id="CHEBI:15378"/>
        <dbReference type="ChEBI" id="CHEBI:58223"/>
        <dbReference type="ChEBI" id="CHEBI:61495"/>
        <dbReference type="ChEBI" id="CHEBI:62959"/>
        <dbReference type="ChEBI" id="CHEBI:70731"/>
        <dbReference type="EC" id="2.4.1.180"/>
    </reaction>
</comment>
<comment type="pathway">
    <text evidence="1">Bacterial outer membrane biogenesis; enterobacterial common antigen biosynthesis.</text>
</comment>
<comment type="similarity">
    <text evidence="1">Belongs to the glycosyltransferase 26 family.</text>
</comment>
<reference key="1">
    <citation type="journal article" date="2008" name="J. Bacteriol.">
        <title>The complete genome sequence of Escherichia coli DH10B: insights into the biology of a laboratory workhorse.</title>
        <authorList>
            <person name="Durfee T."/>
            <person name="Nelson R."/>
            <person name="Baldwin S."/>
            <person name="Plunkett G. III"/>
            <person name="Burland V."/>
            <person name="Mau B."/>
            <person name="Petrosino J.F."/>
            <person name="Qin X."/>
            <person name="Muzny D.M."/>
            <person name="Ayele M."/>
            <person name="Gibbs R.A."/>
            <person name="Csorgo B."/>
            <person name="Posfai G."/>
            <person name="Weinstock G.M."/>
            <person name="Blattner F.R."/>
        </authorList>
    </citation>
    <scope>NUCLEOTIDE SEQUENCE [LARGE SCALE GENOMIC DNA]</scope>
    <source>
        <strain>K12 / DH10B</strain>
    </source>
</reference>